<sequence length="872" mass="99257">MFVNLHTNSYYNFLNSTLSPQKLVDLAVQDQQVAVCLTDPNLFGATEFFLACQKAHIKPLIGLSVTVRHYEQNVNLLVIAQTNRGYQNLMCLALVKDQPDLQLEPFLDGNVVIICTQTELRLNTANPVYLAHGLSGRYPKIAVTQKPVKCQNTNKDLTLLLTLKQISQINSEHFQPLEWKLSRSLNEIQLDPPLLQQLRHQPFLSQKAAQQIFSEEELGNLQKLVEQSQWDLTKLKASSLQVSHNDAQMLSEQCQLALTEFLKLNPQLNKQLYEERLAKELEIINSLHFASYFLVVSDLVQFAHNNDILIGPGRGSAVGSLVAFLLKITQIDPVANNLIFERFISRHRQGLPDIDIDIMETKRDLVIDYVMQKYGREQCAQIVTFQKFKTRSALRDVGKVFNHIEGAEDLLGKLPKDKSLLELDVNGVTDPVLQLSLKSFRLLWEVAREIINFPRQPSIHASGVVIVTEPLITTIPLMVGNNNNYVTQVSMDWLEWYNLNKFDLLGLINLTMIHEVVQAVKPKEVSVQQFLQQIPLDDEATFTNLTNQATLGVFQLESFGMKKVLKQIKPHNLHDLAIVLALYRPGPQDNINTFIANRNLGFDTSDIDPRILPILKETYGVLIFQEQVINIAKTVANYSLETADSFRRAISKKNLQVIQDNMRSFYEGALANNFSLKAATTIFNYIQRFAGYGFNLSHALGYALLSYWTAWLKTHYFEQFNLWWLNHEQGKKEKQKQLLNEFISSGYEICPPLINKAKSDFSVQDKKLYLGFKLINGIGDKQAHALEHVQEVLKQNPNLSLIATVNLCLSKTVGGLELKDITLLQQAGCFNCFNYTVDFNLAKSFWVQSNHELFPKIPLDQPPVINWKSFGF</sequence>
<evidence type="ECO:0000250" key="1"/>
<evidence type="ECO:0000305" key="2"/>
<protein>
    <recommendedName>
        <fullName>DNA polymerase III subunit alpha</fullName>
        <ecNumber>2.7.7.7</ecNumber>
    </recommendedName>
</protein>
<comment type="function">
    <text evidence="1">DNA polymerase III is a complex, multichain enzyme responsible for most of the replicative synthesis in bacteria. This DNA polymerase also exhibits 3' to 5' exonuclease activity. The alpha chain is the DNA polymerase (By similarity).</text>
</comment>
<comment type="catalytic activity">
    <reaction>
        <text>DNA(n) + a 2'-deoxyribonucleoside 5'-triphosphate = DNA(n+1) + diphosphate</text>
        <dbReference type="Rhea" id="RHEA:22508"/>
        <dbReference type="Rhea" id="RHEA-COMP:17339"/>
        <dbReference type="Rhea" id="RHEA-COMP:17340"/>
        <dbReference type="ChEBI" id="CHEBI:33019"/>
        <dbReference type="ChEBI" id="CHEBI:61560"/>
        <dbReference type="ChEBI" id="CHEBI:173112"/>
        <dbReference type="EC" id="2.7.7.7"/>
    </reaction>
</comment>
<comment type="subunit">
    <text evidence="1">DNA polymerase III contains a core (composed of alpha, epsilon and theta chains) that associates with a tau subunit. This core dimerizes to form the PolIII' complex. PolIII' associates with the gamma complex (composed of gamma, delta, delta', psi and chi chains) and with the beta chain to form the complete DNA polymerase III complex (By similarity).</text>
</comment>
<comment type="subcellular location">
    <subcellularLocation>
        <location evidence="1">Cytoplasm</location>
    </subcellularLocation>
</comment>
<comment type="similarity">
    <text evidence="2">Belongs to the DNA polymerase type-C family. DnaE subfamily.</text>
</comment>
<keyword id="KW-0963">Cytoplasm</keyword>
<keyword id="KW-0235">DNA replication</keyword>
<keyword id="KW-0239">DNA-directed DNA polymerase</keyword>
<keyword id="KW-0548">Nucleotidyltransferase</keyword>
<keyword id="KW-1185">Reference proteome</keyword>
<keyword id="KW-0808">Transferase</keyword>
<dbReference type="EC" id="2.7.7.7"/>
<dbReference type="EMBL" id="U00089">
    <property type="protein sequence ID" value="AAB96107.1"/>
    <property type="molecule type" value="Genomic_DNA"/>
</dbReference>
<dbReference type="PIR" id="S73785">
    <property type="entry name" value="S73785"/>
</dbReference>
<dbReference type="RefSeq" id="NP_110066.1">
    <property type="nucleotide sequence ID" value="NC_000912.1"/>
</dbReference>
<dbReference type="RefSeq" id="WP_010874734.1">
    <property type="nucleotide sequence ID" value="NZ_OU342337.1"/>
</dbReference>
<dbReference type="SMR" id="P75404"/>
<dbReference type="IntAct" id="P75404">
    <property type="interactions" value="4"/>
</dbReference>
<dbReference type="STRING" id="272634.MPN_378"/>
<dbReference type="EnsemblBacteria" id="AAB96107">
    <property type="protein sequence ID" value="AAB96107"/>
    <property type="gene ID" value="MPN_378"/>
</dbReference>
<dbReference type="KEGG" id="mpn:MPN_378"/>
<dbReference type="PATRIC" id="fig|272634.6.peg.409"/>
<dbReference type="HOGENOM" id="CLU_001600_0_1_14"/>
<dbReference type="OrthoDB" id="9803237at2"/>
<dbReference type="BioCyc" id="MPNE272634:G1GJ3-599-MONOMER"/>
<dbReference type="Proteomes" id="UP000000808">
    <property type="component" value="Chromosome"/>
</dbReference>
<dbReference type="GO" id="GO:0005737">
    <property type="term" value="C:cytoplasm"/>
    <property type="evidence" value="ECO:0007669"/>
    <property type="project" value="UniProtKB-SubCell"/>
</dbReference>
<dbReference type="GO" id="GO:0008408">
    <property type="term" value="F:3'-5' exonuclease activity"/>
    <property type="evidence" value="ECO:0007669"/>
    <property type="project" value="InterPro"/>
</dbReference>
<dbReference type="GO" id="GO:0003887">
    <property type="term" value="F:DNA-directed DNA polymerase activity"/>
    <property type="evidence" value="ECO:0007669"/>
    <property type="project" value="UniProtKB-KW"/>
</dbReference>
<dbReference type="GO" id="GO:0006260">
    <property type="term" value="P:DNA replication"/>
    <property type="evidence" value="ECO:0007669"/>
    <property type="project" value="UniProtKB-KW"/>
</dbReference>
<dbReference type="CDD" id="cd07431">
    <property type="entry name" value="PHP_PolIIIA"/>
    <property type="match status" value="1"/>
</dbReference>
<dbReference type="Gene3D" id="1.10.150.870">
    <property type="match status" value="1"/>
</dbReference>
<dbReference type="Gene3D" id="3.20.20.140">
    <property type="entry name" value="Metal-dependent hydrolases"/>
    <property type="match status" value="1"/>
</dbReference>
<dbReference type="InterPro" id="IPR011708">
    <property type="entry name" value="DNA_pol3_alpha_NTPase_dom"/>
</dbReference>
<dbReference type="InterPro" id="IPR040982">
    <property type="entry name" value="DNA_pol3_finger"/>
</dbReference>
<dbReference type="InterPro" id="IPR004805">
    <property type="entry name" value="DnaE2/DnaE/PolC"/>
</dbReference>
<dbReference type="InterPro" id="IPR029460">
    <property type="entry name" value="DNAPol_HHH"/>
</dbReference>
<dbReference type="InterPro" id="IPR004013">
    <property type="entry name" value="PHP_dom"/>
</dbReference>
<dbReference type="InterPro" id="IPR003141">
    <property type="entry name" value="Pol/His_phosphatase_N"/>
</dbReference>
<dbReference type="NCBIfam" id="TIGR00594">
    <property type="entry name" value="polc"/>
    <property type="match status" value="1"/>
</dbReference>
<dbReference type="PANTHER" id="PTHR32294">
    <property type="entry name" value="DNA POLYMERASE III SUBUNIT ALPHA"/>
    <property type="match status" value="1"/>
</dbReference>
<dbReference type="PANTHER" id="PTHR32294:SF0">
    <property type="entry name" value="DNA POLYMERASE III SUBUNIT ALPHA"/>
    <property type="match status" value="1"/>
</dbReference>
<dbReference type="Pfam" id="PF07733">
    <property type="entry name" value="DNA_pol3_alpha"/>
    <property type="match status" value="1"/>
</dbReference>
<dbReference type="Pfam" id="PF17657">
    <property type="entry name" value="DNA_pol3_finger"/>
    <property type="match status" value="1"/>
</dbReference>
<dbReference type="Pfam" id="PF14579">
    <property type="entry name" value="HHH_6"/>
    <property type="match status" value="1"/>
</dbReference>
<dbReference type="Pfam" id="PF02811">
    <property type="entry name" value="PHP"/>
    <property type="match status" value="1"/>
</dbReference>
<dbReference type="SMART" id="SM00481">
    <property type="entry name" value="POLIIIAc"/>
    <property type="match status" value="1"/>
</dbReference>
<accession>P75404</accession>
<gene>
    <name type="primary">dnaE</name>
    <name type="ordered locus">MPN_378</name>
    <name type="ORF">MP459</name>
</gene>
<reference key="1">
    <citation type="journal article" date="1996" name="Nucleic Acids Res.">
        <title>Complete sequence analysis of the genome of the bacterium Mycoplasma pneumoniae.</title>
        <authorList>
            <person name="Himmelreich R."/>
            <person name="Hilbert H."/>
            <person name="Plagens H."/>
            <person name="Pirkl E."/>
            <person name="Li B.-C."/>
            <person name="Herrmann R."/>
        </authorList>
    </citation>
    <scope>NUCLEOTIDE SEQUENCE [LARGE SCALE GENOMIC DNA]</scope>
    <source>
        <strain>ATCC 29342 / M129 / Subtype 1</strain>
    </source>
</reference>
<name>DPO3A_MYCPN</name>
<proteinExistence type="inferred from homology"/>
<feature type="chain" id="PRO_0000103327" description="DNA polymerase III subunit alpha">
    <location>
        <begin position="1"/>
        <end position="872"/>
    </location>
</feature>
<organism>
    <name type="scientific">Mycoplasma pneumoniae (strain ATCC 29342 / M129 / Subtype 1)</name>
    <name type="common">Mycoplasmoides pneumoniae</name>
    <dbReference type="NCBI Taxonomy" id="272634"/>
    <lineage>
        <taxon>Bacteria</taxon>
        <taxon>Bacillati</taxon>
        <taxon>Mycoplasmatota</taxon>
        <taxon>Mycoplasmoidales</taxon>
        <taxon>Mycoplasmoidaceae</taxon>
        <taxon>Mycoplasmoides</taxon>
    </lineage>
</organism>